<organism>
    <name type="scientific">Tetronarce californica</name>
    <name type="common">Pacific electric ray</name>
    <name type="synonym">Torpedo californica</name>
    <dbReference type="NCBI Taxonomy" id="7787"/>
    <lineage>
        <taxon>Eukaryota</taxon>
        <taxon>Metazoa</taxon>
        <taxon>Chordata</taxon>
        <taxon>Craniata</taxon>
        <taxon>Vertebrata</taxon>
        <taxon>Chondrichthyes</taxon>
        <taxon>Elasmobranchii</taxon>
        <taxon>Batoidea</taxon>
        <taxon>Torpediniformes</taxon>
        <taxon>Torpedinidae</taxon>
        <taxon>Tetronarce</taxon>
    </lineage>
</organism>
<proteinExistence type="evidence at transcript level"/>
<comment type="function">
    <text>May have a role in synaptic regulation or signal transduction.</text>
</comment>
<comment type="subcellular location">
    <subcellularLocation>
        <location>Nucleus</location>
    </subcellularLocation>
</comment>
<comment type="tissue specificity">
    <text>Nervous system tissue. Found in the electric lobe, the brain and the spinal cord.</text>
</comment>
<comment type="miscellaneous">
    <text>Three isoforms are detected: 17.5 kDa, 18.5 kDa and 20.0 kDa. In the neuronal cell soma, the 17.5 kDa species is predominant.</text>
</comment>
<comment type="similarity">
    <text evidence="2">Belongs to the synuclein family.</text>
</comment>
<feature type="chain" id="PRO_0000184041" description="Synuclein">
    <location>
        <begin position="1"/>
        <end position="143"/>
    </location>
</feature>
<feature type="repeat" description="1">
    <location>
        <begin position="20"/>
        <end position="30"/>
    </location>
</feature>
<feature type="repeat" description="2">
    <location>
        <begin position="31"/>
        <end position="41"/>
    </location>
</feature>
<feature type="repeat" description="3">
    <location>
        <begin position="42"/>
        <end position="52"/>
    </location>
</feature>
<feature type="repeat" description="4; approximate">
    <location>
        <begin position="53"/>
        <end position="67"/>
    </location>
</feature>
<feature type="repeat" description="5">
    <location>
        <begin position="68"/>
        <end position="78"/>
    </location>
</feature>
<feature type="region of interest" description="5 X 11 AA tandem repeats of [EGST]-K-T-K-[EQ]-[GQ]-[VA]-X(4)">
    <location>
        <begin position="20"/>
        <end position="78"/>
    </location>
</feature>
<feature type="region of interest" description="Disordered" evidence="1">
    <location>
        <begin position="113"/>
        <end position="143"/>
    </location>
</feature>
<protein>
    <recommendedName>
        <fullName>Synuclein</fullName>
    </recommendedName>
</protein>
<sequence>MDVLKKGFSFAKEGVVAAAEKTKQGVQDAAEKTKQGVQDAAEKTKEGVMYVGTKTKEGVVQSVNTVTEKTKEQANVVGGAVVAGVNTVASKTVEGVENVAAASGVVKLDEHGREIPAEQVAEGKQTTQEPLVEATEATEETGK</sequence>
<keyword id="KW-0539">Nucleus</keyword>
<keyword id="KW-0677">Repeat</keyword>
<name>SYU_TETCF</name>
<dbReference type="PIR" id="A60887">
    <property type="entry name" value="A60887"/>
</dbReference>
<dbReference type="GO" id="GO:0043679">
    <property type="term" value="C:axon terminus"/>
    <property type="evidence" value="ECO:0007669"/>
    <property type="project" value="TreeGrafter"/>
</dbReference>
<dbReference type="GO" id="GO:0005737">
    <property type="term" value="C:cytoplasm"/>
    <property type="evidence" value="ECO:0007669"/>
    <property type="project" value="TreeGrafter"/>
</dbReference>
<dbReference type="GO" id="GO:0043025">
    <property type="term" value="C:neuronal cell body"/>
    <property type="evidence" value="ECO:0007669"/>
    <property type="project" value="TreeGrafter"/>
</dbReference>
<dbReference type="GO" id="GO:0005634">
    <property type="term" value="C:nucleus"/>
    <property type="evidence" value="ECO:0007669"/>
    <property type="project" value="UniProtKB-SubCell"/>
</dbReference>
<dbReference type="GO" id="GO:1903136">
    <property type="term" value="F:cuprous ion binding"/>
    <property type="evidence" value="ECO:0007669"/>
    <property type="project" value="TreeGrafter"/>
</dbReference>
<dbReference type="GO" id="GO:0007268">
    <property type="term" value="P:chemical synaptic transmission"/>
    <property type="evidence" value="ECO:0007669"/>
    <property type="project" value="TreeGrafter"/>
</dbReference>
<dbReference type="GO" id="GO:0050808">
    <property type="term" value="P:synapse organization"/>
    <property type="evidence" value="ECO:0007669"/>
    <property type="project" value="TreeGrafter"/>
</dbReference>
<dbReference type="GO" id="GO:0048488">
    <property type="term" value="P:synaptic vesicle endocytosis"/>
    <property type="evidence" value="ECO:0007669"/>
    <property type="project" value="TreeGrafter"/>
</dbReference>
<dbReference type="Gene3D" id="1.10.287.700">
    <property type="entry name" value="Helix hairpin bin"/>
    <property type="match status" value="1"/>
</dbReference>
<dbReference type="InterPro" id="IPR001058">
    <property type="entry name" value="Synuclein"/>
</dbReference>
<dbReference type="InterPro" id="IPR002462">
    <property type="entry name" value="Synuclein_gamma"/>
</dbReference>
<dbReference type="PANTHER" id="PTHR13820:SF10">
    <property type="entry name" value="GAMMA-SYNUCLEIN"/>
    <property type="match status" value="1"/>
</dbReference>
<dbReference type="PANTHER" id="PTHR13820">
    <property type="entry name" value="SYNUCLEIN"/>
    <property type="match status" value="1"/>
</dbReference>
<dbReference type="Pfam" id="PF01387">
    <property type="entry name" value="Synuclein"/>
    <property type="match status" value="2"/>
</dbReference>
<dbReference type="PRINTS" id="PR01214">
    <property type="entry name" value="GSYNUCLEIN"/>
</dbReference>
<dbReference type="PRINTS" id="PR01211">
    <property type="entry name" value="SYNUCLEIN"/>
</dbReference>
<dbReference type="SUPFAM" id="SSF118375">
    <property type="entry name" value="Synuclein"/>
    <property type="match status" value="2"/>
</dbReference>
<evidence type="ECO:0000256" key="1">
    <source>
        <dbReference type="SAM" id="MobiDB-lite"/>
    </source>
</evidence>
<evidence type="ECO:0000305" key="2"/>
<reference key="1">
    <citation type="journal article" date="1988" name="J. Neurosci.">
        <title>Synuclein: a neuron-specific protein localized to the nucleus and presynaptic nerve terminal.</title>
        <authorList>
            <person name="Maroteaux L."/>
            <person name="Campanelli J.T."/>
            <person name="Scheller R.H."/>
        </authorList>
    </citation>
    <scope>NUCLEOTIDE SEQUENCE</scope>
</reference>
<accession>P37379</accession>